<gene>
    <name evidence="1" type="primary">plsX</name>
    <name type="ordered locus">SAB1093</name>
</gene>
<keyword id="KW-0963">Cytoplasm</keyword>
<keyword id="KW-0444">Lipid biosynthesis</keyword>
<keyword id="KW-0443">Lipid metabolism</keyword>
<keyword id="KW-0594">Phospholipid biosynthesis</keyword>
<keyword id="KW-1208">Phospholipid metabolism</keyword>
<keyword id="KW-0808">Transferase</keyword>
<dbReference type="EC" id="2.3.1.274" evidence="1"/>
<dbReference type="EMBL" id="AJ938182">
    <property type="protein sequence ID" value="CAI80782.1"/>
    <property type="molecule type" value="Genomic_DNA"/>
</dbReference>
<dbReference type="RefSeq" id="WP_000239738.1">
    <property type="nucleotide sequence ID" value="NC_007622.1"/>
</dbReference>
<dbReference type="SMR" id="Q2YXI7"/>
<dbReference type="KEGG" id="sab:SAB1093"/>
<dbReference type="HOGENOM" id="CLU_039379_1_1_9"/>
<dbReference type="UniPathway" id="UPA00085"/>
<dbReference type="GO" id="GO:0005737">
    <property type="term" value="C:cytoplasm"/>
    <property type="evidence" value="ECO:0007669"/>
    <property type="project" value="UniProtKB-SubCell"/>
</dbReference>
<dbReference type="GO" id="GO:0043811">
    <property type="term" value="F:phosphate:acyl-[acyl carrier protein] acyltransferase activity"/>
    <property type="evidence" value="ECO:0007669"/>
    <property type="project" value="UniProtKB-UniRule"/>
</dbReference>
<dbReference type="GO" id="GO:0006633">
    <property type="term" value="P:fatty acid biosynthetic process"/>
    <property type="evidence" value="ECO:0007669"/>
    <property type="project" value="UniProtKB-UniRule"/>
</dbReference>
<dbReference type="GO" id="GO:0008654">
    <property type="term" value="P:phospholipid biosynthetic process"/>
    <property type="evidence" value="ECO:0007669"/>
    <property type="project" value="UniProtKB-KW"/>
</dbReference>
<dbReference type="Gene3D" id="3.40.718.10">
    <property type="entry name" value="Isopropylmalate Dehydrogenase"/>
    <property type="match status" value="1"/>
</dbReference>
<dbReference type="HAMAP" id="MF_00019">
    <property type="entry name" value="PlsX"/>
    <property type="match status" value="1"/>
</dbReference>
<dbReference type="InterPro" id="IPR003664">
    <property type="entry name" value="FA_synthesis"/>
</dbReference>
<dbReference type="InterPro" id="IPR012281">
    <property type="entry name" value="Phospholipid_synth_PlsX-like"/>
</dbReference>
<dbReference type="NCBIfam" id="TIGR00182">
    <property type="entry name" value="plsX"/>
    <property type="match status" value="1"/>
</dbReference>
<dbReference type="PANTHER" id="PTHR30100">
    <property type="entry name" value="FATTY ACID/PHOSPHOLIPID SYNTHESIS PROTEIN PLSX"/>
    <property type="match status" value="1"/>
</dbReference>
<dbReference type="PANTHER" id="PTHR30100:SF1">
    <property type="entry name" value="PHOSPHATE ACYLTRANSFERASE"/>
    <property type="match status" value="1"/>
</dbReference>
<dbReference type="Pfam" id="PF02504">
    <property type="entry name" value="FA_synthesis"/>
    <property type="match status" value="1"/>
</dbReference>
<dbReference type="PIRSF" id="PIRSF002465">
    <property type="entry name" value="Phsphlp_syn_PlsX"/>
    <property type="match status" value="1"/>
</dbReference>
<dbReference type="SUPFAM" id="SSF53659">
    <property type="entry name" value="Isocitrate/Isopropylmalate dehydrogenase-like"/>
    <property type="match status" value="1"/>
</dbReference>
<comment type="function">
    <text evidence="1">Catalyzes the reversible formation of acyl-phosphate (acyl-PO(4)) from acyl-[acyl-carrier-protein] (acyl-ACP). This enzyme utilizes acyl-ACP as fatty acyl donor, but not acyl-CoA.</text>
</comment>
<comment type="catalytic activity">
    <reaction evidence="1">
        <text>a fatty acyl-[ACP] + phosphate = an acyl phosphate + holo-[ACP]</text>
        <dbReference type="Rhea" id="RHEA:42292"/>
        <dbReference type="Rhea" id="RHEA-COMP:9685"/>
        <dbReference type="Rhea" id="RHEA-COMP:14125"/>
        <dbReference type="ChEBI" id="CHEBI:43474"/>
        <dbReference type="ChEBI" id="CHEBI:59918"/>
        <dbReference type="ChEBI" id="CHEBI:64479"/>
        <dbReference type="ChEBI" id="CHEBI:138651"/>
        <dbReference type="EC" id="2.3.1.274"/>
    </reaction>
</comment>
<comment type="pathway">
    <text evidence="1">Lipid metabolism; phospholipid metabolism.</text>
</comment>
<comment type="subunit">
    <text evidence="1">Homodimer. Probably interacts with PlsY.</text>
</comment>
<comment type="subcellular location">
    <subcellularLocation>
        <location evidence="1">Cytoplasm</location>
    </subcellularLocation>
    <text evidence="1">Associated with the membrane possibly through PlsY.</text>
</comment>
<comment type="similarity">
    <text evidence="1">Belongs to the PlsX family.</text>
</comment>
<evidence type="ECO:0000255" key="1">
    <source>
        <dbReference type="HAMAP-Rule" id="MF_00019"/>
    </source>
</evidence>
<feature type="chain" id="PRO_1000001839" description="Phosphate acyltransferase">
    <location>
        <begin position="1"/>
        <end position="328"/>
    </location>
</feature>
<protein>
    <recommendedName>
        <fullName evidence="1">Phosphate acyltransferase</fullName>
        <ecNumber evidence="1">2.3.1.274</ecNumber>
    </recommendedName>
    <alternativeName>
        <fullName evidence="1">Acyl-ACP phosphotransacylase</fullName>
    </alternativeName>
    <alternativeName>
        <fullName evidence="1">Acyl-[acyl-carrier-protein]--phosphate acyltransferase</fullName>
    </alternativeName>
    <alternativeName>
        <fullName evidence="1">Phosphate-acyl-ACP acyltransferase</fullName>
    </alternativeName>
</protein>
<proteinExistence type="inferred from homology"/>
<accession>Q2YXI7</accession>
<sequence length="328" mass="35436">MVKLAIDMMGGDNAPDIVLEAVQKAVEDFKDLEIILFGDEKKYKLNHERIEFRHCSEKIEMEDEPVRAIKRKKDSSMVKMAEAVKSGEADGCVSAGNTGALMSAGLFIVGRIKGVARPALVVTLPTIDGKGFVFLDVGANADAKPEHLLQYAQLGDIYAQKIRGIDNPKISLLNIGTEPAKGNSLTKKSYELLNQDHSLNFVGNIEAKTLMDGDTDVVVTDGYTGNMVLKNLEGTAKSIGKMLKDTIMSSTKNKLAGAILKKDLAEFAKKMDYSEYGGSVLLGLEGTVVKAHGSSNAKAFYSAIRQAKIAGEQNIVQTMKETVGESNE</sequence>
<reference key="1">
    <citation type="journal article" date="2007" name="PLoS ONE">
        <title>Molecular correlates of host specialization in Staphylococcus aureus.</title>
        <authorList>
            <person name="Herron-Olson L."/>
            <person name="Fitzgerald J.R."/>
            <person name="Musser J.M."/>
            <person name="Kapur V."/>
        </authorList>
    </citation>
    <scope>NUCLEOTIDE SEQUENCE [LARGE SCALE GENOMIC DNA]</scope>
    <source>
        <strain>bovine RF122 / ET3-1</strain>
    </source>
</reference>
<organism>
    <name type="scientific">Staphylococcus aureus (strain bovine RF122 / ET3-1)</name>
    <dbReference type="NCBI Taxonomy" id="273036"/>
    <lineage>
        <taxon>Bacteria</taxon>
        <taxon>Bacillati</taxon>
        <taxon>Bacillota</taxon>
        <taxon>Bacilli</taxon>
        <taxon>Bacillales</taxon>
        <taxon>Staphylococcaceae</taxon>
        <taxon>Staphylococcus</taxon>
    </lineage>
</organism>
<name>PLSX_STAAB</name>